<comment type="similarity">
    <text evidence="1">Belongs to the UPF0145 family.</text>
</comment>
<reference key="1">
    <citation type="journal article" date="2002" name="Nucleic Acids Res.">
        <title>Genome sequence of Shigella flexneri 2a: insights into pathogenicity through comparison with genomes of Escherichia coli K12 and O157.</title>
        <authorList>
            <person name="Jin Q."/>
            <person name="Yuan Z."/>
            <person name="Xu J."/>
            <person name="Wang Y."/>
            <person name="Shen Y."/>
            <person name="Lu W."/>
            <person name="Wang J."/>
            <person name="Liu H."/>
            <person name="Yang J."/>
            <person name="Yang F."/>
            <person name="Zhang X."/>
            <person name="Zhang J."/>
            <person name="Yang G."/>
            <person name="Wu H."/>
            <person name="Qu D."/>
            <person name="Dong J."/>
            <person name="Sun L."/>
            <person name="Xue Y."/>
            <person name="Zhao A."/>
            <person name="Gao Y."/>
            <person name="Zhu J."/>
            <person name="Kan B."/>
            <person name="Ding K."/>
            <person name="Chen S."/>
            <person name="Cheng H."/>
            <person name="Yao Z."/>
            <person name="He B."/>
            <person name="Chen R."/>
            <person name="Ma D."/>
            <person name="Qiang B."/>
            <person name="Wen Y."/>
            <person name="Hou Y."/>
            <person name="Yu J."/>
        </authorList>
    </citation>
    <scope>NUCLEOTIDE SEQUENCE [LARGE SCALE GENOMIC DNA]</scope>
    <source>
        <strain>301 / Serotype 2a</strain>
    </source>
</reference>
<reference key="2">
    <citation type="journal article" date="2003" name="Infect. Immun.">
        <title>Complete genome sequence and comparative genomics of Shigella flexneri serotype 2a strain 2457T.</title>
        <authorList>
            <person name="Wei J."/>
            <person name="Goldberg M.B."/>
            <person name="Burland V."/>
            <person name="Venkatesan M.M."/>
            <person name="Deng W."/>
            <person name="Fournier G."/>
            <person name="Mayhew G.F."/>
            <person name="Plunkett G. III"/>
            <person name="Rose D.J."/>
            <person name="Darling A."/>
            <person name="Mau B."/>
            <person name="Perna N.T."/>
            <person name="Payne S.M."/>
            <person name="Runyen-Janecky L.J."/>
            <person name="Zhou S."/>
            <person name="Schwartz D.C."/>
            <person name="Blattner F.R."/>
        </authorList>
    </citation>
    <scope>NUCLEOTIDE SEQUENCE [LARGE SCALE GENOMIC DNA]</scope>
    <source>
        <strain>ATCC 700930 / 2457T / Serotype 2a</strain>
    </source>
</reference>
<organism>
    <name type="scientific">Shigella flexneri</name>
    <dbReference type="NCBI Taxonomy" id="623"/>
    <lineage>
        <taxon>Bacteria</taxon>
        <taxon>Pseudomonadati</taxon>
        <taxon>Pseudomonadota</taxon>
        <taxon>Gammaproteobacteria</taxon>
        <taxon>Enterobacterales</taxon>
        <taxon>Enterobacteriaceae</taxon>
        <taxon>Shigella</taxon>
    </lineage>
</organism>
<accession>Q83LS2</accession>
<accession>Q7C2D3</accession>
<sequence>MQFSTTPTLEGLTIVEYCGVVTGEAILGANIFRDFFAGIRDIVGGRSGAYEKELRKAREIAFEELGSQARALGADAVVGIDIDYETVGQNGSMLMVSVSGTAVKTRR</sequence>
<protein>
    <recommendedName>
        <fullName evidence="1">UPF0145 protein YbjQ</fullName>
    </recommendedName>
</protein>
<keyword id="KW-0002">3D-structure</keyword>
<keyword id="KW-1185">Reference proteome</keyword>
<evidence type="ECO:0000255" key="1">
    <source>
        <dbReference type="HAMAP-Rule" id="MF_00338"/>
    </source>
</evidence>
<evidence type="ECO:0007829" key="2">
    <source>
        <dbReference type="PDB" id="1Y2I"/>
    </source>
</evidence>
<proteinExistence type="evidence at protein level"/>
<dbReference type="EMBL" id="AE005674">
    <property type="protein sequence ID" value="AAN42454.1"/>
    <property type="molecule type" value="Genomic_DNA"/>
</dbReference>
<dbReference type="EMBL" id="AE014073">
    <property type="protein sequence ID" value="AAP16327.1"/>
    <property type="molecule type" value="Genomic_DNA"/>
</dbReference>
<dbReference type="RefSeq" id="NP_706747.1">
    <property type="nucleotide sequence ID" value="NC_004337.2"/>
</dbReference>
<dbReference type="RefSeq" id="WP_001160722.1">
    <property type="nucleotide sequence ID" value="NZ_WPGW01000122.1"/>
</dbReference>
<dbReference type="PDB" id="1Y2I">
    <property type="method" value="X-ray"/>
    <property type="resolution" value="2.30 A"/>
    <property type="chains" value="A/B/C/D/E=1-107"/>
</dbReference>
<dbReference type="PDBsum" id="1Y2I"/>
<dbReference type="SMR" id="Q83LS2"/>
<dbReference type="STRING" id="198214.SF0821"/>
<dbReference type="PaxDb" id="198214-SF0821"/>
<dbReference type="GeneID" id="1023799"/>
<dbReference type="KEGG" id="sfl:SF0821"/>
<dbReference type="KEGG" id="sfx:S0862"/>
<dbReference type="PATRIC" id="fig|198214.7.peg.950"/>
<dbReference type="HOGENOM" id="CLU_117144_3_0_6"/>
<dbReference type="EvolutionaryTrace" id="Q83LS2"/>
<dbReference type="Proteomes" id="UP000001006">
    <property type="component" value="Chromosome"/>
</dbReference>
<dbReference type="Proteomes" id="UP000002673">
    <property type="component" value="Chromosome"/>
</dbReference>
<dbReference type="Gene3D" id="3.30.110.70">
    <property type="entry name" value="Hypothetical protein apc22750. Chain B"/>
    <property type="match status" value="1"/>
</dbReference>
<dbReference type="HAMAP" id="MF_00338">
    <property type="entry name" value="UPF0145"/>
    <property type="match status" value="1"/>
</dbReference>
<dbReference type="InterPro" id="IPR035439">
    <property type="entry name" value="UPF0145_dom_sf"/>
</dbReference>
<dbReference type="InterPro" id="IPR002765">
    <property type="entry name" value="UPF0145_YbjQ-like"/>
</dbReference>
<dbReference type="NCBIfam" id="NF002776">
    <property type="entry name" value="PRK02877.1"/>
    <property type="match status" value="1"/>
</dbReference>
<dbReference type="PANTHER" id="PTHR34068">
    <property type="entry name" value="UPF0145 PROTEIN YBJQ"/>
    <property type="match status" value="1"/>
</dbReference>
<dbReference type="PANTHER" id="PTHR34068:SF1">
    <property type="entry name" value="UPF0145 PROTEIN YBJQ"/>
    <property type="match status" value="1"/>
</dbReference>
<dbReference type="Pfam" id="PF01906">
    <property type="entry name" value="YbjQ_1"/>
    <property type="match status" value="1"/>
</dbReference>
<dbReference type="SUPFAM" id="SSF117782">
    <property type="entry name" value="YbjQ-like"/>
    <property type="match status" value="1"/>
</dbReference>
<gene>
    <name evidence="1" type="primary">ybjQ</name>
    <name type="ordered locus">SF0821</name>
    <name type="ordered locus">S0862</name>
</gene>
<feature type="chain" id="PRO_0000225846" description="UPF0145 protein YbjQ">
    <location>
        <begin position="1"/>
        <end position="107"/>
    </location>
</feature>
<feature type="strand" evidence="2">
    <location>
        <begin position="5"/>
        <end position="8"/>
    </location>
</feature>
<feature type="strand" evidence="2">
    <location>
        <begin position="12"/>
        <end position="27"/>
    </location>
</feature>
<feature type="helix" evidence="2">
    <location>
        <begin position="29"/>
        <end position="35"/>
    </location>
</feature>
<feature type="turn" evidence="2">
    <location>
        <begin position="36"/>
        <end position="38"/>
    </location>
</feature>
<feature type="strand" evidence="2">
    <location>
        <begin position="41"/>
        <end position="44"/>
    </location>
</feature>
<feature type="turn" evidence="2">
    <location>
        <begin position="45"/>
        <end position="47"/>
    </location>
</feature>
<feature type="helix" evidence="2">
    <location>
        <begin position="50"/>
        <end position="72"/>
    </location>
</feature>
<feature type="strand" evidence="2">
    <location>
        <begin position="75"/>
        <end position="88"/>
    </location>
</feature>
<feature type="strand" evidence="2">
    <location>
        <begin position="93"/>
        <end position="107"/>
    </location>
</feature>
<name>YBJQ_SHIFL</name>